<gene>
    <name evidence="2" type="primary">mutM</name>
    <name evidence="2" type="synonym">fpg</name>
    <name type="ordered locus">XOO0299</name>
</gene>
<comment type="function">
    <text evidence="2">Involved in base excision repair of DNA damaged by oxidation or by mutagenic agents. Acts as a DNA glycosylase that recognizes and removes damaged bases. Has a preference for oxidized purines, such as 7,8-dihydro-8-oxoguanine (8-oxoG). Has AP (apurinic/apyrimidinic) lyase activity and introduces nicks in the DNA strand. Cleaves the DNA backbone by beta-delta elimination to generate a single-strand break at the site of the removed base with both 3'- and 5'-phosphates.</text>
</comment>
<comment type="catalytic activity">
    <reaction evidence="2">
        <text>Hydrolysis of DNA containing ring-opened 7-methylguanine residues, releasing 2,6-diamino-4-hydroxy-5-(N-methyl)formamidopyrimidine.</text>
        <dbReference type="EC" id="3.2.2.23"/>
    </reaction>
</comment>
<comment type="catalytic activity">
    <reaction evidence="2">
        <text>2'-deoxyribonucleotide-(2'-deoxyribose 5'-phosphate)-2'-deoxyribonucleotide-DNA = a 3'-end 2'-deoxyribonucleotide-(2,3-dehydro-2,3-deoxyribose 5'-phosphate)-DNA + a 5'-end 5'-phospho-2'-deoxyribonucleoside-DNA + H(+)</text>
        <dbReference type="Rhea" id="RHEA:66592"/>
        <dbReference type="Rhea" id="RHEA-COMP:13180"/>
        <dbReference type="Rhea" id="RHEA-COMP:16897"/>
        <dbReference type="Rhea" id="RHEA-COMP:17067"/>
        <dbReference type="ChEBI" id="CHEBI:15378"/>
        <dbReference type="ChEBI" id="CHEBI:136412"/>
        <dbReference type="ChEBI" id="CHEBI:157695"/>
        <dbReference type="ChEBI" id="CHEBI:167181"/>
        <dbReference type="EC" id="4.2.99.18"/>
    </reaction>
</comment>
<comment type="cofactor">
    <cofactor evidence="2">
        <name>Zn(2+)</name>
        <dbReference type="ChEBI" id="CHEBI:29105"/>
    </cofactor>
    <text evidence="2">Binds 1 zinc ion per subunit.</text>
</comment>
<comment type="subunit">
    <text evidence="2">Monomer.</text>
</comment>
<comment type="similarity">
    <text evidence="2">Belongs to the FPG family.</text>
</comment>
<comment type="sequence caution" evidence="3">
    <conflict type="erroneous initiation">
        <sequence resource="EMBL-CDS" id="AAW73553"/>
    </conflict>
</comment>
<organism>
    <name type="scientific">Xanthomonas oryzae pv. oryzae (strain KACC10331 / KXO85)</name>
    <dbReference type="NCBI Taxonomy" id="291331"/>
    <lineage>
        <taxon>Bacteria</taxon>
        <taxon>Pseudomonadati</taxon>
        <taxon>Pseudomonadota</taxon>
        <taxon>Gammaproteobacteria</taxon>
        <taxon>Lysobacterales</taxon>
        <taxon>Lysobacteraceae</taxon>
        <taxon>Xanthomonas</taxon>
    </lineage>
</organism>
<protein>
    <recommendedName>
        <fullName evidence="2">Formamidopyrimidine-DNA glycosylase</fullName>
        <shortName evidence="2">Fapy-DNA glycosylase</shortName>
        <ecNumber evidence="2">3.2.2.23</ecNumber>
    </recommendedName>
    <alternativeName>
        <fullName evidence="2">DNA-(apurinic or apyrimidinic site) lyase MutM</fullName>
        <shortName evidence="2">AP lyase MutM</shortName>
        <ecNumber evidence="2">4.2.99.18</ecNumber>
    </alternativeName>
</protein>
<feature type="initiator methionine" description="Removed" evidence="1">
    <location>
        <position position="1"/>
    </location>
</feature>
<feature type="chain" id="PRO_0000228486" description="Formamidopyrimidine-DNA glycosylase">
    <location>
        <begin position="2"/>
        <end position="271"/>
    </location>
</feature>
<feature type="zinc finger region" description="FPG-type" evidence="2">
    <location>
        <begin position="237"/>
        <end position="271"/>
    </location>
</feature>
<feature type="active site" description="Schiff-base intermediate with DNA" evidence="2">
    <location>
        <position position="2"/>
    </location>
</feature>
<feature type="active site" description="Proton donor" evidence="2">
    <location>
        <position position="3"/>
    </location>
</feature>
<feature type="active site" description="Proton donor; for beta-elimination activity" evidence="2">
    <location>
        <position position="58"/>
    </location>
</feature>
<feature type="active site" description="Proton donor; for delta-elimination activity" evidence="2">
    <location>
        <position position="261"/>
    </location>
</feature>
<feature type="binding site" evidence="2">
    <location>
        <position position="92"/>
    </location>
    <ligand>
        <name>DNA</name>
        <dbReference type="ChEBI" id="CHEBI:16991"/>
    </ligand>
</feature>
<feature type="binding site" evidence="2">
    <location>
        <position position="111"/>
    </location>
    <ligand>
        <name>DNA</name>
        <dbReference type="ChEBI" id="CHEBI:16991"/>
    </ligand>
</feature>
<feature type="binding site" evidence="2">
    <location>
        <position position="152"/>
    </location>
    <ligand>
        <name>DNA</name>
        <dbReference type="ChEBI" id="CHEBI:16991"/>
    </ligand>
</feature>
<keyword id="KW-0227">DNA damage</keyword>
<keyword id="KW-0234">DNA repair</keyword>
<keyword id="KW-0238">DNA-binding</keyword>
<keyword id="KW-0326">Glycosidase</keyword>
<keyword id="KW-0378">Hydrolase</keyword>
<keyword id="KW-0456">Lyase</keyword>
<keyword id="KW-0479">Metal-binding</keyword>
<keyword id="KW-0511">Multifunctional enzyme</keyword>
<keyword id="KW-1185">Reference proteome</keyword>
<keyword id="KW-0862">Zinc</keyword>
<keyword id="KW-0863">Zinc-finger</keyword>
<proteinExistence type="inferred from homology"/>
<name>FPG_XANOR</name>
<accession>Q5H667</accession>
<reference key="1">
    <citation type="journal article" date="2005" name="Nucleic Acids Res.">
        <title>The genome sequence of Xanthomonas oryzae pathovar oryzae KACC10331, the bacterial blight pathogen of rice.</title>
        <authorList>
            <person name="Lee B.-M."/>
            <person name="Park Y.-J."/>
            <person name="Park D.-S."/>
            <person name="Kang H.-W."/>
            <person name="Kim J.-G."/>
            <person name="Song E.-S."/>
            <person name="Park I.-C."/>
            <person name="Yoon U.-H."/>
            <person name="Hahn J.-H."/>
            <person name="Koo B.-S."/>
            <person name="Lee G.-B."/>
            <person name="Kim H."/>
            <person name="Park H.-S."/>
            <person name="Yoon K.-O."/>
            <person name="Kim J.-H."/>
            <person name="Jung C.-H."/>
            <person name="Koh N.-H."/>
            <person name="Seo J.-S."/>
            <person name="Go S.-J."/>
        </authorList>
    </citation>
    <scope>NUCLEOTIDE SEQUENCE [LARGE SCALE GENOMIC DNA]</scope>
    <source>
        <strain>KACC10331 / KXO85</strain>
    </source>
</reference>
<evidence type="ECO:0000250" key="1"/>
<evidence type="ECO:0000255" key="2">
    <source>
        <dbReference type="HAMAP-Rule" id="MF_00103"/>
    </source>
</evidence>
<evidence type="ECO:0000305" key="3"/>
<dbReference type="EC" id="3.2.2.23" evidence="2"/>
<dbReference type="EC" id="4.2.99.18" evidence="2"/>
<dbReference type="EMBL" id="AE013598">
    <property type="protein sequence ID" value="AAW73553.1"/>
    <property type="status" value="ALT_INIT"/>
    <property type="molecule type" value="Genomic_DNA"/>
</dbReference>
<dbReference type="SMR" id="Q5H667"/>
<dbReference type="STRING" id="291331.XOO0299"/>
<dbReference type="KEGG" id="xoo:XOO0299"/>
<dbReference type="HOGENOM" id="CLU_038423_1_1_6"/>
<dbReference type="Proteomes" id="UP000006735">
    <property type="component" value="Chromosome"/>
</dbReference>
<dbReference type="GO" id="GO:0034039">
    <property type="term" value="F:8-oxo-7,8-dihydroguanine DNA N-glycosylase activity"/>
    <property type="evidence" value="ECO:0007669"/>
    <property type="project" value="TreeGrafter"/>
</dbReference>
<dbReference type="GO" id="GO:0140078">
    <property type="term" value="F:class I DNA-(apurinic or apyrimidinic site) endonuclease activity"/>
    <property type="evidence" value="ECO:0007669"/>
    <property type="project" value="UniProtKB-EC"/>
</dbReference>
<dbReference type="GO" id="GO:0003684">
    <property type="term" value="F:damaged DNA binding"/>
    <property type="evidence" value="ECO:0007669"/>
    <property type="project" value="InterPro"/>
</dbReference>
<dbReference type="GO" id="GO:0008270">
    <property type="term" value="F:zinc ion binding"/>
    <property type="evidence" value="ECO:0007669"/>
    <property type="project" value="UniProtKB-UniRule"/>
</dbReference>
<dbReference type="GO" id="GO:0006284">
    <property type="term" value="P:base-excision repair"/>
    <property type="evidence" value="ECO:0007669"/>
    <property type="project" value="InterPro"/>
</dbReference>
<dbReference type="CDD" id="cd08966">
    <property type="entry name" value="EcFpg-like_N"/>
    <property type="match status" value="1"/>
</dbReference>
<dbReference type="FunFam" id="1.10.8.50:FF:000003">
    <property type="entry name" value="Formamidopyrimidine-DNA glycosylase"/>
    <property type="match status" value="1"/>
</dbReference>
<dbReference type="FunFam" id="3.20.190.10:FF:000001">
    <property type="entry name" value="Formamidopyrimidine-DNA glycosylase"/>
    <property type="match status" value="1"/>
</dbReference>
<dbReference type="Gene3D" id="1.10.8.50">
    <property type="match status" value="1"/>
</dbReference>
<dbReference type="Gene3D" id="3.20.190.10">
    <property type="entry name" value="MutM-like, N-terminal"/>
    <property type="match status" value="1"/>
</dbReference>
<dbReference type="HAMAP" id="MF_00103">
    <property type="entry name" value="Fapy_DNA_glycosyl"/>
    <property type="match status" value="1"/>
</dbReference>
<dbReference type="InterPro" id="IPR015886">
    <property type="entry name" value="DNA_glyclase/AP_lyase_DNA-bd"/>
</dbReference>
<dbReference type="InterPro" id="IPR015887">
    <property type="entry name" value="DNA_glyclase_Znf_dom_DNA_BS"/>
</dbReference>
<dbReference type="InterPro" id="IPR020629">
    <property type="entry name" value="Formamido-pyr_DNA_Glyclase"/>
</dbReference>
<dbReference type="InterPro" id="IPR012319">
    <property type="entry name" value="FPG_cat"/>
</dbReference>
<dbReference type="InterPro" id="IPR035937">
    <property type="entry name" value="MutM-like_N-ter"/>
</dbReference>
<dbReference type="InterPro" id="IPR010979">
    <property type="entry name" value="Ribosomal_uS13-like_H2TH"/>
</dbReference>
<dbReference type="InterPro" id="IPR000214">
    <property type="entry name" value="Znf_DNA_glyclase/AP_lyase"/>
</dbReference>
<dbReference type="InterPro" id="IPR010663">
    <property type="entry name" value="Znf_FPG/IleRS"/>
</dbReference>
<dbReference type="NCBIfam" id="TIGR00577">
    <property type="entry name" value="fpg"/>
    <property type="match status" value="1"/>
</dbReference>
<dbReference type="NCBIfam" id="NF002211">
    <property type="entry name" value="PRK01103.1"/>
    <property type="match status" value="1"/>
</dbReference>
<dbReference type="PANTHER" id="PTHR22993">
    <property type="entry name" value="FORMAMIDOPYRIMIDINE-DNA GLYCOSYLASE"/>
    <property type="match status" value="1"/>
</dbReference>
<dbReference type="PANTHER" id="PTHR22993:SF9">
    <property type="entry name" value="FORMAMIDOPYRIMIDINE-DNA GLYCOSYLASE"/>
    <property type="match status" value="1"/>
</dbReference>
<dbReference type="Pfam" id="PF01149">
    <property type="entry name" value="Fapy_DNA_glyco"/>
    <property type="match status" value="1"/>
</dbReference>
<dbReference type="Pfam" id="PF06831">
    <property type="entry name" value="H2TH"/>
    <property type="match status" value="1"/>
</dbReference>
<dbReference type="Pfam" id="PF06827">
    <property type="entry name" value="zf-FPG_IleRS"/>
    <property type="match status" value="1"/>
</dbReference>
<dbReference type="SMART" id="SM00898">
    <property type="entry name" value="Fapy_DNA_glyco"/>
    <property type="match status" value="1"/>
</dbReference>
<dbReference type="SMART" id="SM01232">
    <property type="entry name" value="H2TH"/>
    <property type="match status" value="1"/>
</dbReference>
<dbReference type="SUPFAM" id="SSF57716">
    <property type="entry name" value="Glucocorticoid receptor-like (DNA-binding domain)"/>
    <property type="match status" value="1"/>
</dbReference>
<dbReference type="SUPFAM" id="SSF81624">
    <property type="entry name" value="N-terminal domain of MutM-like DNA repair proteins"/>
    <property type="match status" value="1"/>
</dbReference>
<dbReference type="SUPFAM" id="SSF46946">
    <property type="entry name" value="S13-like H2TH domain"/>
    <property type="match status" value="1"/>
</dbReference>
<dbReference type="PROSITE" id="PS51068">
    <property type="entry name" value="FPG_CAT"/>
    <property type="match status" value="1"/>
</dbReference>
<dbReference type="PROSITE" id="PS01242">
    <property type="entry name" value="ZF_FPG_1"/>
    <property type="match status" value="1"/>
</dbReference>
<dbReference type="PROSITE" id="PS51066">
    <property type="entry name" value="ZF_FPG_2"/>
    <property type="match status" value="1"/>
</dbReference>
<sequence length="271" mass="29914">MPELPEVETTLRGLSPHLVGQRIHGVILRRPDLRWPIPEQIERLLPGATITNVRRRAKYLLIDTDAGGSALLHLGMSGSLRVLPGDTLPRAHDHVDISLQNGRVLRFNDPRRFGCLLWQSDIQAHELLAALGPEPLSEAFTGDYLHALAYGRRAPVKTFLMDQAVVVGVGNIYAAESLHCAGISPLREAGKVSLDRYRRLAAAVKDILSYAIRRGGTTLRDFISPDGAPGYFEQELTVYGREGEPCKQCGRVLKHAMIGQRATVWCGSCQR</sequence>